<protein>
    <recommendedName>
        <fullName>Mercuric resistance operon regulatory protein</fullName>
    </recommendedName>
</protein>
<gene>
    <name type="primary">merR</name>
</gene>
<accession>P0A2Q9</accession>
<accession>P07044</accession>
<comment type="function">
    <text>Mediates the mercuric-dependent induction of mercury resistance operon. In the absence of mercury MerR represses transcription by binding tightly to the mer operator region; when mercury is present the dimeric complex binds a single ion and becomes a potent transcriptional activator, while remaining bound to the mer site.</text>
</comment>
<sequence length="144" mass="15905">MENNLENLTIGVFAKAAGVNVETIRFYQRKGLLREPDKPYGSIRRYGEADVVRVKFVKSAQRLGFSLDEIAELLRLDDGTHCEEASSLAEHKLKDVREKMADLARMETVLSELVCACHARKGNVSCPLIASLQGEAGLARSAMP</sequence>
<feature type="chain" id="PRO_0000098141" description="Mercuric resistance operon regulatory protein">
    <location>
        <begin position="1"/>
        <end position="144"/>
    </location>
</feature>
<feature type="domain" description="HTH merR-type" evidence="1">
    <location>
        <begin position="7"/>
        <end position="76"/>
    </location>
</feature>
<feature type="DNA-binding region" description="H-T-H motif" evidence="1">
    <location>
        <begin position="10"/>
        <end position="29"/>
    </location>
</feature>
<feature type="binding site">
    <location>
        <position position="82"/>
    </location>
    <ligand>
        <name>Hg(2+)</name>
        <dbReference type="ChEBI" id="CHEBI:16793"/>
    </ligand>
</feature>
<feature type="binding site">
    <location>
        <position position="117"/>
    </location>
    <ligand>
        <name>Hg(2+)</name>
        <dbReference type="ChEBI" id="CHEBI:16793"/>
    </ligand>
</feature>
<feature type="binding site">
    <location>
        <position position="126"/>
    </location>
    <ligand>
        <name>Hg(2+)</name>
        <dbReference type="ChEBI" id="CHEBI:16793"/>
    </ligand>
</feature>
<organism>
    <name type="scientific">Shigella flexneri</name>
    <dbReference type="NCBI Taxonomy" id="623"/>
    <lineage>
        <taxon>Bacteria</taxon>
        <taxon>Pseudomonadati</taxon>
        <taxon>Pseudomonadota</taxon>
        <taxon>Gammaproteobacteria</taxon>
        <taxon>Enterobacterales</taxon>
        <taxon>Enterobacteriaceae</taxon>
        <taxon>Shigella</taxon>
    </lineage>
</organism>
<evidence type="ECO:0000255" key="1">
    <source>
        <dbReference type="PROSITE-ProRule" id="PRU00254"/>
    </source>
</evidence>
<geneLocation type="plasmid">
    <name>IncFII R100</name>
    <name>NR1</name>
</geneLocation>
<dbReference type="EMBL" id="K03089">
    <property type="protein sequence ID" value="AAB59072.1"/>
    <property type="molecule type" value="Genomic_DNA"/>
</dbReference>
<dbReference type="RefSeq" id="WP_000429836.1">
    <property type="nucleotide sequence ID" value="NZ_WPET01000167.1"/>
</dbReference>
<dbReference type="SMR" id="P0A2Q9"/>
<dbReference type="GeneID" id="93248043"/>
<dbReference type="GO" id="GO:0003677">
    <property type="term" value="F:DNA binding"/>
    <property type="evidence" value="ECO:0007669"/>
    <property type="project" value="UniProtKB-KW"/>
</dbReference>
<dbReference type="GO" id="GO:0003700">
    <property type="term" value="F:DNA-binding transcription factor activity"/>
    <property type="evidence" value="ECO:0007669"/>
    <property type="project" value="InterPro"/>
</dbReference>
<dbReference type="GO" id="GO:0045340">
    <property type="term" value="F:mercury ion binding"/>
    <property type="evidence" value="ECO:0007669"/>
    <property type="project" value="InterPro"/>
</dbReference>
<dbReference type="GO" id="GO:0046689">
    <property type="term" value="P:response to mercury ion"/>
    <property type="evidence" value="ECO:0007669"/>
    <property type="project" value="UniProtKB-KW"/>
</dbReference>
<dbReference type="CDD" id="cd04783">
    <property type="entry name" value="HTH_MerR1"/>
    <property type="match status" value="1"/>
</dbReference>
<dbReference type="Gene3D" id="1.10.1660.10">
    <property type="match status" value="1"/>
</dbReference>
<dbReference type="InterPro" id="IPR009061">
    <property type="entry name" value="DNA-bd_dom_put_sf"/>
</dbReference>
<dbReference type="InterPro" id="IPR011794">
    <property type="entry name" value="MerR"/>
</dbReference>
<dbReference type="InterPro" id="IPR000551">
    <property type="entry name" value="MerR-type_HTH_dom"/>
</dbReference>
<dbReference type="InterPro" id="IPR047057">
    <property type="entry name" value="MerR_fam"/>
</dbReference>
<dbReference type="InterPro" id="IPR015358">
    <property type="entry name" value="Tscrpt_reg_MerR_DNA-bd"/>
</dbReference>
<dbReference type="NCBIfam" id="TIGR02051">
    <property type="entry name" value="MerR"/>
    <property type="match status" value="1"/>
</dbReference>
<dbReference type="NCBIfam" id="NF010315">
    <property type="entry name" value="PRK13752.1"/>
    <property type="match status" value="1"/>
</dbReference>
<dbReference type="PANTHER" id="PTHR30204:SF69">
    <property type="entry name" value="MERR-FAMILY TRANSCRIPTIONAL REGULATOR"/>
    <property type="match status" value="1"/>
</dbReference>
<dbReference type="PANTHER" id="PTHR30204">
    <property type="entry name" value="REDOX-CYCLING DRUG-SENSING TRANSCRIPTIONAL ACTIVATOR SOXR"/>
    <property type="match status" value="1"/>
</dbReference>
<dbReference type="Pfam" id="PF00376">
    <property type="entry name" value="MerR"/>
    <property type="match status" value="1"/>
</dbReference>
<dbReference type="Pfam" id="PF09278">
    <property type="entry name" value="MerR-DNA-bind"/>
    <property type="match status" value="1"/>
</dbReference>
<dbReference type="PRINTS" id="PR00040">
    <property type="entry name" value="HTHMERR"/>
</dbReference>
<dbReference type="SMART" id="SM00422">
    <property type="entry name" value="HTH_MERR"/>
    <property type="match status" value="1"/>
</dbReference>
<dbReference type="SUPFAM" id="SSF46955">
    <property type="entry name" value="Putative DNA-binding domain"/>
    <property type="match status" value="1"/>
</dbReference>
<dbReference type="PROSITE" id="PS00552">
    <property type="entry name" value="HTH_MERR_1"/>
    <property type="match status" value="1"/>
</dbReference>
<dbReference type="PROSITE" id="PS50937">
    <property type="entry name" value="HTH_MERR_2"/>
    <property type="match status" value="1"/>
</dbReference>
<name>MERR_SHIFL</name>
<keyword id="KW-0010">Activator</keyword>
<keyword id="KW-0238">DNA-binding</keyword>
<keyword id="KW-0475">Mercuric resistance</keyword>
<keyword id="KW-0476">Mercury</keyword>
<keyword id="KW-0479">Metal-binding</keyword>
<keyword id="KW-0614">Plasmid</keyword>
<keyword id="KW-0678">Repressor</keyword>
<keyword id="KW-0804">Transcription</keyword>
<keyword id="KW-0805">Transcription regulation</keyword>
<keyword id="KW-0814">Transposable element</keyword>
<proteinExistence type="predicted"/>
<reference key="1">
    <citation type="journal article" date="1984" name="J. Mol. Appl. Genet.">
        <title>The DNA sequence of the mercury resistance operon of the IncFII plasmid NR1.</title>
        <authorList>
            <person name="Barrineau P."/>
            <person name="Gilbert P."/>
            <person name="Jackson W.J."/>
            <person name="Jones C.S."/>
            <person name="Summers A.O."/>
            <person name="Wisdom S."/>
        </authorList>
    </citation>
    <scope>NUCLEOTIDE SEQUENCE [GENOMIC DNA]</scope>
    <source>
        <transposon>Tn21</transposon>
    </source>
</reference>